<name>ERAP2_HUMAN</name>
<comment type="function">
    <text evidence="4 6 7">Aminopeptidase that plays a central role in peptide trimming, a step required for the generation of most HLA class I-binding peptides. Peptide trimming is essential to customize longer precursor peptides to fit them to the correct length required for presentation on MHC class I molecules. Preferentially hydrolyzes the basic residues Arg and Lys.</text>
</comment>
<comment type="cofactor">
    <cofactor evidence="1">
        <name>Zn(2+)</name>
        <dbReference type="ChEBI" id="CHEBI:29105"/>
    </cofactor>
    <text evidence="1">Binds 1 zinc ion per subunit.</text>
</comment>
<comment type="subunit">
    <text evidence="6 9">Heterodimer with ERAP1.</text>
</comment>
<comment type="interaction">
    <interactant intactId="EBI-2834295">
        <id>Q6P179</id>
    </interactant>
    <interactant intactId="EBI-299412">
        <id>Q9NZ08</id>
        <label>ERAP1</label>
    </interactant>
    <organismsDiffer>false</organismsDiffer>
    <experiments>5</experiments>
</comment>
<comment type="subcellular location">
    <subcellularLocation>
        <location evidence="4">Endoplasmic reticulum membrane</location>
        <topology evidence="4">Single-pass type II membrane protein</topology>
    </subcellularLocation>
</comment>
<comment type="alternative products">
    <event type="alternative splicing"/>
    <isoform>
        <id>Q6P179-1</id>
        <name>1</name>
        <sequence type="displayed"/>
    </isoform>
    <isoform>
        <id>Q6P179-2</id>
        <name>2</name>
        <sequence type="described" ref="VSP_030674 VSP_030675"/>
    </isoform>
    <isoform>
        <id>Q6P179-3</id>
        <name>3</name>
        <sequence type="described" ref="VSP_030671"/>
    </isoform>
    <isoform>
        <id>Q6P179-4</id>
        <name>4</name>
        <sequence type="described" ref="VSP_030672 VSP_030673"/>
    </isoform>
</comment>
<comment type="tissue specificity">
    <text evidence="4">Ubiquitously expressed. Highly expressed in spleen and leukocytes.</text>
</comment>
<comment type="induction">
    <text evidence="5 6">By IFNG/IFN-gamma.</text>
</comment>
<comment type="PTM">
    <text evidence="4 8 9">N-glycosylated.</text>
</comment>
<comment type="miscellaneous">
    <text>Defects in the expression of this gene may cause improper antigen processing, possibly leading to favor tumor escape from the immune surveillance.</text>
</comment>
<comment type="similarity">
    <text evidence="12">Belongs to the peptidase M1 family.</text>
</comment>
<protein>
    <recommendedName>
        <fullName>Endoplasmic reticulum aminopeptidase 2</fullName>
        <ecNumber>3.4.11.-</ecNumber>
    </recommendedName>
    <alternativeName>
        <fullName>Leukocyte-derived arginine aminopeptidase</fullName>
        <shortName>L-RAP</shortName>
    </alternativeName>
</protein>
<organism>
    <name type="scientific">Homo sapiens</name>
    <name type="common">Human</name>
    <dbReference type="NCBI Taxonomy" id="9606"/>
    <lineage>
        <taxon>Eukaryota</taxon>
        <taxon>Metazoa</taxon>
        <taxon>Chordata</taxon>
        <taxon>Craniata</taxon>
        <taxon>Vertebrata</taxon>
        <taxon>Euteleostomi</taxon>
        <taxon>Mammalia</taxon>
        <taxon>Eutheria</taxon>
        <taxon>Euarchontoglires</taxon>
        <taxon>Primates</taxon>
        <taxon>Haplorrhini</taxon>
        <taxon>Catarrhini</taxon>
        <taxon>Hominidae</taxon>
        <taxon>Homo</taxon>
    </lineage>
</organism>
<gene>
    <name type="primary">ERAP2</name>
    <name type="synonym">LRAP</name>
</gene>
<proteinExistence type="evidence at protein level"/>
<reference key="1">
    <citation type="journal article" date="2003" name="J. Biol. Chem.">
        <title>Human leukocyte-derived arginine aminopeptidase. The third member of the oxytocinase subfamily of aminopeptidases.</title>
        <authorList>
            <person name="Tanioka T."/>
            <person name="Hattori A."/>
            <person name="Masuda S."/>
            <person name="Nomura Y."/>
            <person name="Nakayama H."/>
            <person name="Mizutani S."/>
            <person name="Tsujimoto M."/>
        </authorList>
    </citation>
    <scope>NUCLEOTIDE SEQUENCE [MRNA] (ISOFORM 1)</scope>
    <scope>FUNCTION</scope>
    <scope>ENZYME ACTIVITY</scope>
    <scope>SUBCELLULAR LOCATION</scope>
    <scope>GLYCOSYLATION</scope>
    <scope>TOPOLOGY</scope>
    <scope>TISSUE SPECIFICITY</scope>
    <scope>VARIANT ASN-392</scope>
</reference>
<reference key="2">
    <citation type="journal article" date="2005" name="FEBS J.">
        <title>Regulation of the human leukocyte-derived arginine aminopeptidase/endoplasmic reticulum-aminopeptidase 2 gene by interferon-gamma.</title>
        <authorList>
            <person name="Tanioka T."/>
            <person name="Hattori A."/>
            <person name="Mizutani S."/>
            <person name="Tsujimoto M."/>
        </authorList>
    </citation>
    <scope>NUCLEOTIDE SEQUENCE [MRNA] (ISOFORM 2)</scope>
    <scope>INDUCTION BY IFNG</scope>
    <scope>VARIANT ASN-392</scope>
</reference>
<reference key="3">
    <citation type="submission" date="1999-10" db="EMBL/GenBank/DDBJ databases">
        <title>Molecular characterization of aminopeptidase MAMS.</title>
        <authorList>
            <person name="Schomburg L."/>
        </authorList>
    </citation>
    <scope>NUCLEOTIDE SEQUENCE [MRNA] (ISOFORM 1)</scope>
</reference>
<reference key="4">
    <citation type="submission" date="2005-07" db="EMBL/GenBank/DDBJ databases">
        <authorList>
            <person name="Mural R.J."/>
            <person name="Istrail S."/>
            <person name="Sutton G.G."/>
            <person name="Florea L."/>
            <person name="Halpern A.L."/>
            <person name="Mobarry C.M."/>
            <person name="Lippert R."/>
            <person name="Walenz B."/>
            <person name="Shatkay H."/>
            <person name="Dew I."/>
            <person name="Miller J.R."/>
            <person name="Flanigan M.J."/>
            <person name="Edwards N.J."/>
            <person name="Bolanos R."/>
            <person name="Fasulo D."/>
            <person name="Halldorsson B.V."/>
            <person name="Hannenhalli S."/>
            <person name="Turner R."/>
            <person name="Yooseph S."/>
            <person name="Lu F."/>
            <person name="Nusskern D.R."/>
            <person name="Shue B.C."/>
            <person name="Zheng X.H."/>
            <person name="Zhong F."/>
            <person name="Delcher A.L."/>
            <person name="Huson D.H."/>
            <person name="Kravitz S.A."/>
            <person name="Mouchard L."/>
            <person name="Reinert K."/>
            <person name="Remington K.A."/>
            <person name="Clark A.G."/>
            <person name="Waterman M.S."/>
            <person name="Eichler E.E."/>
            <person name="Adams M.D."/>
            <person name="Hunkapiller M.W."/>
            <person name="Myers E.W."/>
            <person name="Venter J.C."/>
        </authorList>
    </citation>
    <scope>NUCLEOTIDE SEQUENCE [LARGE SCALE GENOMIC DNA]</scope>
</reference>
<reference key="5">
    <citation type="journal article" date="2004" name="Genome Res.">
        <title>The status, quality, and expansion of the NIH full-length cDNA project: the Mammalian Gene Collection (MGC).</title>
        <authorList>
            <consortium name="The MGC Project Team"/>
        </authorList>
    </citation>
    <scope>NUCLEOTIDE SEQUENCE [LARGE SCALE MRNA] (ISOFORMS 3 AND 4)</scope>
    <source>
        <tissue>Skeletal muscle</tissue>
        <tissue>Skin</tissue>
    </source>
</reference>
<reference key="6">
    <citation type="journal article" date="2005" name="J. Proteome Res.">
        <title>Human plasma N-glycoproteome analysis by immunoaffinity subtraction, hydrazide chemistry, and mass spectrometry.</title>
        <authorList>
            <person name="Liu T."/>
            <person name="Qian W.-J."/>
            <person name="Gritsenko M.A."/>
            <person name="Camp D.G. II"/>
            <person name="Monroe M.E."/>
            <person name="Moore R.J."/>
            <person name="Smith R.D."/>
        </authorList>
    </citation>
    <scope>GLYCOSYLATION [LARGE SCALE ANALYSIS] AT ASN-119</scope>
    <source>
        <tissue>Plasma</tissue>
    </source>
</reference>
<reference key="7">
    <citation type="journal article" date="2005" name="Nat. Immunol.">
        <title>Concerted peptide trimming by human ERAP1 and ERAP2 aminopeptidase complexes in the endoplasmic reticulum.</title>
        <authorList>
            <person name="Saveanu L."/>
            <person name="Carroll O."/>
            <person name="Lindo V."/>
            <person name="Del Val M."/>
            <person name="Lopez D."/>
            <person name="Lepelletier Y."/>
            <person name="Greer F."/>
            <person name="Schomburg L."/>
            <person name="Fruci D."/>
            <person name="Niedermann G."/>
            <person name="van Endert P.M."/>
        </authorList>
    </citation>
    <scope>FUNCTION</scope>
    <scope>SUBUNIT</scope>
    <scope>INDUCTION BY IFNG</scope>
</reference>
<reference key="8">
    <citation type="journal article" date="2005" name="Proc. Natl. Acad. Sci. U.S.A.">
        <title>The ER aminopeptidase, ERAP1, trims precursors to lengths of MHC class I peptides by a 'molecular ruler' mechanism.</title>
        <authorList>
            <person name="Chang S.-C."/>
            <person name="Momburg F."/>
            <person name="Bhutani N."/>
            <person name="Goldberg A.L."/>
        </authorList>
    </citation>
    <scope>FUNCTION</scope>
</reference>
<reference key="9">
    <citation type="journal article" date="2006" name="J. Immunol.">
        <title>Expression of endoplasmic reticulum aminopeptidases in EBV-B cell lines from healthy donors and in leukemia/lymphoma, carcinoma, and melanoma cell lines.</title>
        <authorList>
            <person name="Fruci D."/>
            <person name="Ferracuti S."/>
            <person name="Limongi M.Z."/>
            <person name="Cunsolo V."/>
            <person name="Giorda E."/>
            <person name="Fraioli R."/>
            <person name="Sibilio L."/>
            <person name="Carroll O."/>
            <person name="Hattori A."/>
            <person name="van Endert P.M."/>
            <person name="Giacomini P."/>
        </authorList>
    </citation>
    <scope>GENE REGULATION</scope>
</reference>
<reference key="10">
    <citation type="journal article" date="2007" name="Blood">
        <title>Inactivation of RB1 in mantle-cell lymphoma detected by nonsense-mediated mRNA decay pathway inhibition and microarray analysis.</title>
        <authorList>
            <person name="Pinyol M."/>
            <person name="Bea S."/>
            <person name="Pla L."/>
            <person name="Ribrag V."/>
            <person name="Bosq J."/>
            <person name="Rosenwald A."/>
            <person name="Campo E."/>
            <person name="Jares P."/>
        </authorList>
    </citation>
    <scope>ALTERNATIVE SPLICING</scope>
</reference>
<reference key="11">
    <citation type="journal article" date="2011" name="BMC Syst. Biol.">
        <title>Initial characterization of the human central proteome.</title>
        <authorList>
            <person name="Burkard T.R."/>
            <person name="Planyavsky M."/>
            <person name="Kaupe I."/>
            <person name="Breitwieser F.P."/>
            <person name="Buerckstuemmer T."/>
            <person name="Bennett K.L."/>
            <person name="Superti-Furga G."/>
            <person name="Colinge J."/>
        </authorList>
    </citation>
    <scope>IDENTIFICATION BY MASS SPECTROMETRY [LARGE SCALE ANALYSIS]</scope>
</reference>
<reference key="12">
    <citation type="journal article" date="2012" name="Biochemistry">
        <title>The crystal structure of human endoplasmic reticulum aminopeptidase 2 reveals the atomic basis for distinct roles in antigen processing.</title>
        <authorList>
            <person name="Birtley J.R."/>
            <person name="Saridakis E."/>
            <person name="Stratikos E."/>
            <person name="Mavridis I.M."/>
        </authorList>
    </citation>
    <scope>X-RAY CRYSTALLOGRAPHY (3.08 ANGSTROMS) OF 3-960 IN COMPLEX WITH SUBSTRATE</scope>
    <scope>GLYCOSYLATION AT ASN-85; ASN-219; ASN-405 AND ASN-650</scope>
    <scope>ACTIVE SITE</scope>
    <scope>ZINC-BINDING SITES</scope>
    <scope>SUBUNIT</scope>
    <scope>DISULFIDE BONDS</scope>
</reference>
<feature type="chain" id="PRO_0000315719" description="Endoplasmic reticulum aminopeptidase 2">
    <location>
        <begin position="1"/>
        <end position="960"/>
    </location>
</feature>
<feature type="topological domain" description="Cytoplasmic" evidence="2">
    <location>
        <begin position="1"/>
        <end position="20"/>
    </location>
</feature>
<feature type="transmembrane region" description="Helical; Signal-anchor for type II membrane protein" evidence="2">
    <location>
        <begin position="21"/>
        <end position="40"/>
    </location>
</feature>
<feature type="topological domain" description="Lumenal" evidence="2">
    <location>
        <begin position="41"/>
        <end position="960"/>
    </location>
</feature>
<feature type="active site" description="Proton acceptor" evidence="3 9">
    <location>
        <position position="371"/>
    </location>
</feature>
<feature type="binding site" evidence="9">
    <location>
        <position position="200"/>
    </location>
    <ligand>
        <name>substrate</name>
    </ligand>
</feature>
<feature type="binding site">
    <location>
        <begin position="334"/>
        <end position="338"/>
    </location>
    <ligand>
        <name>substrate</name>
    </ligand>
</feature>
<feature type="binding site">
    <location>
        <position position="370"/>
    </location>
    <ligand>
        <name>Zn(2+)</name>
        <dbReference type="ChEBI" id="CHEBI:29105"/>
        <note>catalytic</note>
    </ligand>
</feature>
<feature type="binding site">
    <location>
        <position position="374"/>
    </location>
    <ligand>
        <name>Zn(2+)</name>
        <dbReference type="ChEBI" id="CHEBI:29105"/>
        <note>catalytic</note>
    </ligand>
</feature>
<feature type="binding site">
    <location>
        <position position="393"/>
    </location>
    <ligand>
        <name>Zn(2+)</name>
        <dbReference type="ChEBI" id="CHEBI:29105"/>
        <note>catalytic</note>
    </ligand>
</feature>
<feature type="site" description="Transition state stabilizer">
    <location>
        <position position="455"/>
    </location>
</feature>
<feature type="glycosylation site" description="N-linked (GlcNAc...) asparagine" evidence="9">
    <location>
        <position position="85"/>
    </location>
</feature>
<feature type="glycosylation site" description="N-linked (GlcNAc...) asparagine" evidence="8">
    <location>
        <position position="119"/>
    </location>
</feature>
<feature type="glycosylation site" description="N-linked (GlcNAc...) asparagine" evidence="9">
    <location>
        <position position="219"/>
    </location>
</feature>
<feature type="glycosylation site" description="N-linked (GlcNAc...) asparagine" evidence="9">
    <location>
        <position position="405"/>
    </location>
</feature>
<feature type="glycosylation site" description="N-linked (GlcNAc...) asparagine" evidence="9">
    <location>
        <position position="650"/>
    </location>
</feature>
<feature type="disulfide bond" evidence="9">
    <location>
        <begin position="421"/>
        <end position="460"/>
    </location>
</feature>
<feature type="disulfide bond" evidence="9">
    <location>
        <begin position="759"/>
        <end position="766"/>
    </location>
</feature>
<feature type="splice variant" id="VSP_030671" description="In isoform 3." evidence="10">
    <location>
        <begin position="238"/>
        <end position="282"/>
    </location>
</feature>
<feature type="splice variant" id="VSP_030672" description="In isoform 4." evidence="10">
    <original>DLIAIPDFAPGAMENWGLITYRETSLL</original>
    <variation>GMFKFHIIVFIFAHKTCFDLFPLSLSM</variation>
    <location>
        <begin position="324"/>
        <end position="350"/>
    </location>
</feature>
<feature type="splice variant" id="VSP_030673" description="In isoform 4." evidence="10">
    <location>
        <begin position="351"/>
        <end position="960"/>
    </location>
</feature>
<feature type="splice variant" id="VSP_030674" description="In isoform 2." evidence="11">
    <original>LAFLGENA</original>
    <variation>VRIKRVTE</variation>
    <location>
        <begin position="525"/>
        <end position="532"/>
    </location>
</feature>
<feature type="splice variant" id="VSP_030675" description="In isoform 2." evidence="11">
    <location>
        <begin position="533"/>
        <end position="960"/>
    </location>
</feature>
<feature type="sequence variant" id="VAR_038285" description="In dbSNP:rs3733905.">
    <original>P</original>
    <variation>L</variation>
    <location>
        <position position="214"/>
    </location>
</feature>
<feature type="sequence variant" id="VAR_038286" description="In dbSNP:rs2549782." evidence="4 5">
    <original>K</original>
    <variation>N</variation>
    <location>
        <position position="392"/>
    </location>
</feature>
<feature type="sequence variant" id="VAR_051569" description="In dbSNP:rs34261036.">
    <original>L</original>
    <variation>R</variation>
    <location>
        <position position="411"/>
    </location>
</feature>
<feature type="sequence variant" id="VAR_038287" description="In dbSNP:rs17408150.">
    <original>L</original>
    <variation>Q</variation>
    <location>
        <position position="669"/>
    </location>
</feature>
<feature type="sequence conflict" description="In Ref. 5; AAH17927." evidence="12" ref="5">
    <original>R</original>
    <variation>K</variation>
    <location>
        <position position="129"/>
    </location>
</feature>
<feature type="strand" evidence="16">
    <location>
        <begin position="59"/>
        <end position="61"/>
    </location>
</feature>
<feature type="strand" evidence="18">
    <location>
        <begin position="66"/>
        <end position="68"/>
    </location>
</feature>
<feature type="strand" evidence="16">
    <location>
        <begin position="71"/>
        <end position="85"/>
    </location>
</feature>
<feature type="turn" evidence="16">
    <location>
        <begin position="86"/>
        <end position="89"/>
    </location>
</feature>
<feature type="strand" evidence="16">
    <location>
        <begin position="90"/>
        <end position="101"/>
    </location>
</feature>
<feature type="strand" evidence="16">
    <location>
        <begin position="106"/>
        <end position="111"/>
    </location>
</feature>
<feature type="strand" evidence="16">
    <location>
        <begin position="116"/>
        <end position="123"/>
    </location>
</feature>
<feature type="strand" evidence="16">
    <location>
        <begin position="125"/>
        <end position="127"/>
    </location>
</feature>
<feature type="helix" evidence="16">
    <location>
        <begin position="128"/>
        <end position="130"/>
    </location>
</feature>
<feature type="strand" evidence="16">
    <location>
        <begin position="138"/>
        <end position="142"/>
    </location>
</feature>
<feature type="helix" evidence="16">
    <location>
        <begin position="143"/>
        <end position="145"/>
    </location>
</feature>
<feature type="strand" evidence="16">
    <location>
        <begin position="147"/>
        <end position="151"/>
    </location>
</feature>
<feature type="strand" evidence="16">
    <location>
        <begin position="160"/>
        <end position="171"/>
    </location>
</feature>
<feature type="strand" evidence="16">
    <location>
        <begin position="173"/>
        <end position="185"/>
    </location>
</feature>
<feature type="strand" evidence="14">
    <location>
        <begin position="187"/>
        <end position="189"/>
    </location>
</feature>
<feature type="strand" evidence="16">
    <location>
        <begin position="191"/>
        <end position="198"/>
    </location>
</feature>
<feature type="turn" evidence="16">
    <location>
        <begin position="200"/>
        <end position="203"/>
    </location>
</feature>
<feature type="helix" evidence="16">
    <location>
        <begin position="204"/>
        <end position="206"/>
    </location>
</feature>
<feature type="strand" evidence="16">
    <location>
        <begin position="218"/>
        <end position="226"/>
    </location>
</feature>
<feature type="strand" evidence="16">
    <location>
        <begin position="231"/>
        <end position="236"/>
    </location>
</feature>
<feature type="strand" evidence="16">
    <location>
        <begin position="238"/>
        <end position="243"/>
    </location>
</feature>
<feature type="strand" evidence="15">
    <location>
        <begin position="245"/>
        <end position="247"/>
    </location>
</feature>
<feature type="strand" evidence="16">
    <location>
        <begin position="249"/>
        <end position="253"/>
    </location>
</feature>
<feature type="helix" evidence="16">
    <location>
        <begin position="261"/>
        <end position="263"/>
    </location>
</feature>
<feature type="strand" evidence="16">
    <location>
        <begin position="266"/>
        <end position="269"/>
    </location>
</feature>
<feature type="strand" evidence="16">
    <location>
        <begin position="272"/>
        <end position="277"/>
    </location>
</feature>
<feature type="strand" evidence="16">
    <location>
        <begin position="283"/>
        <end position="288"/>
    </location>
</feature>
<feature type="helix" evidence="16">
    <location>
        <begin position="290"/>
        <end position="296"/>
    </location>
</feature>
<feature type="helix" evidence="16">
    <location>
        <begin position="297"/>
        <end position="314"/>
    </location>
</feature>
<feature type="strand" evidence="16">
    <location>
        <begin position="320"/>
        <end position="330"/>
    </location>
</feature>
<feature type="strand" evidence="16">
    <location>
        <begin position="332"/>
        <end position="336"/>
    </location>
</feature>
<feature type="strand" evidence="16">
    <location>
        <begin position="341"/>
        <end position="345"/>
    </location>
</feature>
<feature type="helix" evidence="16">
    <location>
        <begin position="346"/>
        <end position="349"/>
    </location>
</feature>
<feature type="turn" evidence="16">
    <location>
        <begin position="353"/>
        <end position="355"/>
    </location>
</feature>
<feature type="helix" evidence="16">
    <location>
        <begin position="358"/>
        <end position="374"/>
    </location>
</feature>
<feature type="turn" evidence="16">
    <location>
        <begin position="378"/>
        <end position="380"/>
    </location>
</feature>
<feature type="strand" evidence="16">
    <location>
        <begin position="381"/>
        <end position="385"/>
    </location>
</feature>
<feature type="helix" evidence="16">
    <location>
        <begin position="386"/>
        <end position="389"/>
    </location>
</feature>
<feature type="helix" evidence="16">
    <location>
        <begin position="390"/>
        <end position="407"/>
    </location>
</feature>
<feature type="helix" evidence="16">
    <location>
        <begin position="409"/>
        <end position="411"/>
    </location>
</feature>
<feature type="helix" evidence="16">
    <location>
        <begin position="413"/>
        <end position="428"/>
    </location>
</feature>
<feature type="strand" evidence="15">
    <location>
        <begin position="430"/>
        <end position="432"/>
    </location>
</feature>
<feature type="helix" evidence="16">
    <location>
        <begin position="443"/>
        <end position="448"/>
    </location>
</feature>
<feature type="turn" evidence="16">
    <location>
        <begin position="452"/>
        <end position="455"/>
    </location>
</feature>
<feature type="helix" evidence="16">
    <location>
        <begin position="456"/>
        <end position="469"/>
    </location>
</feature>
<feature type="helix" evidence="16">
    <location>
        <begin position="471"/>
        <end position="484"/>
    </location>
</feature>
<feature type="turn" evidence="16">
    <location>
        <begin position="485"/>
        <end position="487"/>
    </location>
</feature>
<feature type="strand" evidence="16">
    <location>
        <begin position="488"/>
        <end position="490"/>
    </location>
</feature>
<feature type="helix" evidence="16">
    <location>
        <begin position="492"/>
        <end position="500"/>
    </location>
</feature>
<feature type="strand" evidence="14">
    <location>
        <begin position="504"/>
        <end position="507"/>
    </location>
</feature>
<feature type="strand" evidence="14">
    <location>
        <begin position="510"/>
        <end position="517"/>
    </location>
</feature>
<feature type="helix" evidence="16">
    <location>
        <begin position="531"/>
        <end position="542"/>
    </location>
</feature>
<feature type="strand" evidence="16">
    <location>
        <begin position="548"/>
        <end position="555"/>
    </location>
</feature>
<feature type="strand" evidence="16">
    <location>
        <begin position="558"/>
        <end position="565"/>
    </location>
</feature>
<feature type="strand" evidence="19">
    <location>
        <begin position="568"/>
        <end position="570"/>
    </location>
</feature>
<feature type="strand" evidence="17">
    <location>
        <begin position="572"/>
        <end position="574"/>
    </location>
</feature>
<feature type="helix" evidence="16">
    <location>
        <begin position="575"/>
        <end position="581"/>
    </location>
</feature>
<feature type="strand" evidence="16">
    <location>
        <begin position="588"/>
        <end position="596"/>
    </location>
</feature>
<feature type="strand" evidence="16">
    <location>
        <begin position="601"/>
        <end position="605"/>
    </location>
</feature>
<feature type="strand" evidence="16">
    <location>
        <begin position="607"/>
        <end position="613"/>
    </location>
</feature>
<feature type="strand" evidence="16">
    <location>
        <begin position="621"/>
        <end position="624"/>
    </location>
</feature>
<feature type="helix" evidence="16">
    <location>
        <begin position="625"/>
        <end position="627"/>
    </location>
</feature>
<feature type="strand" evidence="16">
    <location>
        <begin position="632"/>
        <end position="635"/>
    </location>
</feature>
<feature type="turn" evidence="15">
    <location>
        <begin position="636"/>
        <end position="638"/>
    </location>
</feature>
<feature type="helix" evidence="16">
    <location>
        <begin position="639"/>
        <end position="650"/>
    </location>
</feature>
<feature type="helix" evidence="16">
    <location>
        <begin position="651"/>
        <end position="653"/>
    </location>
</feature>
<feature type="helix" evidence="16">
    <location>
        <begin position="656"/>
        <end position="671"/>
    </location>
</feature>
<feature type="strand" evidence="13">
    <location>
        <begin position="673"/>
        <end position="675"/>
    </location>
</feature>
<feature type="helix" evidence="16">
    <location>
        <begin position="677"/>
        <end position="683"/>
    </location>
</feature>
<feature type="helix" evidence="16">
    <location>
        <begin position="684"/>
        <end position="688"/>
    </location>
</feature>
<feature type="helix" evidence="16">
    <location>
        <begin position="693"/>
        <end position="712"/>
    </location>
</feature>
<feature type="helix" evidence="16">
    <location>
        <begin position="716"/>
        <end position="729"/>
    </location>
</feature>
<feature type="helix" evidence="16">
    <location>
        <begin position="731"/>
        <end position="735"/>
    </location>
</feature>
<feature type="strand" evidence="14">
    <location>
        <begin position="739"/>
        <end position="741"/>
    </location>
</feature>
<feature type="helix" evidence="16">
    <location>
        <begin position="745"/>
        <end position="760"/>
    </location>
</feature>
<feature type="helix" evidence="16">
    <location>
        <begin position="764"/>
        <end position="779"/>
    </location>
</feature>
<feature type="turn" evidence="14">
    <location>
        <begin position="780"/>
        <end position="782"/>
    </location>
</feature>
<feature type="helix" evidence="16">
    <location>
        <begin position="788"/>
        <end position="790"/>
    </location>
</feature>
<feature type="helix" evidence="16">
    <location>
        <begin position="791"/>
        <end position="798"/>
    </location>
</feature>
<feature type="helix" evidence="16">
    <location>
        <begin position="802"/>
        <end position="814"/>
    </location>
</feature>
<feature type="helix" evidence="16">
    <location>
        <begin position="818"/>
        <end position="829"/>
    </location>
</feature>
<feature type="helix" evidence="16">
    <location>
        <begin position="834"/>
        <end position="846"/>
    </location>
</feature>
<feature type="strand" evidence="16">
    <location>
        <begin position="848"/>
        <end position="850"/>
    </location>
</feature>
<feature type="helix" evidence="16">
    <location>
        <begin position="852"/>
        <end position="854"/>
    </location>
</feature>
<feature type="helix" evidence="16">
    <location>
        <begin position="855"/>
        <end position="863"/>
    </location>
</feature>
<feature type="helix" evidence="16">
    <location>
        <begin position="866"/>
        <end position="878"/>
    </location>
</feature>
<feature type="helix" evidence="16">
    <location>
        <begin position="880"/>
        <end position="886"/>
    </location>
</feature>
<feature type="helix" evidence="16">
    <location>
        <begin position="892"/>
        <end position="900"/>
    </location>
</feature>
<feature type="turn" evidence="16">
    <location>
        <begin position="901"/>
        <end position="904"/>
    </location>
</feature>
<feature type="helix" evidence="16">
    <location>
        <begin position="908"/>
        <end position="923"/>
    </location>
</feature>
<feature type="helix" evidence="16">
    <location>
        <begin position="930"/>
        <end position="960"/>
    </location>
</feature>
<keyword id="KW-0002">3D-structure</keyword>
<keyword id="KW-1064">Adaptive immunity</keyword>
<keyword id="KW-0025">Alternative splicing</keyword>
<keyword id="KW-0031">Aminopeptidase</keyword>
<keyword id="KW-1015">Disulfide bond</keyword>
<keyword id="KW-0256">Endoplasmic reticulum</keyword>
<keyword id="KW-0325">Glycoprotein</keyword>
<keyword id="KW-0378">Hydrolase</keyword>
<keyword id="KW-0391">Immunity</keyword>
<keyword id="KW-0472">Membrane</keyword>
<keyword id="KW-0479">Metal-binding</keyword>
<keyword id="KW-0482">Metalloprotease</keyword>
<keyword id="KW-0645">Protease</keyword>
<keyword id="KW-1267">Proteomics identification</keyword>
<keyword id="KW-1185">Reference proteome</keyword>
<keyword id="KW-0735">Signal-anchor</keyword>
<keyword id="KW-0812">Transmembrane</keyword>
<keyword id="KW-1133">Transmembrane helix</keyword>
<keyword id="KW-0862">Zinc</keyword>
<accession>Q6P179</accession>
<accession>Q7Z5K1</accession>
<accession>Q8TD32</accession>
<accession>Q8WVJ4</accession>
<accession>Q9HBX2</accession>
<sequence length="960" mass="110462">MFHSSAMVNSHRKPMFNIHRGFYCLTAILPQICICSQFSVPSSYHFTEDPGAFPVATNGERFPWQELRLPSVVIPLHYDLFVHPNLTSLDFVASEKIEVLVSNATQFIILHSKDLEITNATLQSEEDSRYMKPGKELKVLSYPAHEQIALLVPEKLTPHLKYYVAMDFQAKLGDGFEGFYKSTYRTLGGETRILAVTDFEPTQARMAFPCFDEPLFKANFSIKIRRESRHIALSNMPKVKTIELEGGLLEDHFETTVKMSTYLVAYIVCDFHSLSGFTSSGVKVSIYASPDKRNQTHYALQASLKLLDFYEKYFDIYYPLSKLDLIAIPDFAPGAMENWGLITYRETSLLFDPKTSSASDKLWVTRVIAHELAHQWFGNLVTMEWWNDIWLKEGFAKYMELIAVNATYPELQFDDYFLNVCFEVITKDSLNSSRPISKPAETPTQIQEMFDEVSYNKGACILNMLKDFLGEEKFQKGIIQYLKKFSYRNAKNDDLWSSLSNSCLESDFTSGGVCHSDPKMTSNMLAFLGENAEVKEMMTTWTLQKGIPLLVVKQDGCSLRLQQERFLQGVFQEDPEWRALQERYLWHIPLTYSTSSSNVIHRHILKSKTDTLDLPEKTSWVKFNVDSNGYYIVHYEGHGWDQLITQLNQNHTLLRPKDRVGLIHDVFQLVGAGRLTLDKALDMTYYLQHETSSPALLEGLSYLESFYHMMDRRNISDISENLKRYLLQYFKPVIDRQSWSDKGSVWDRMLRSALLKLACDLNHAPCIQKAAELFSQWMESSGKLNIPTDVLKIVYSVGAQTTAGWNYLLEQYELSMSSAEQNKILYALSTSKHQEKLLKLIELGMEGKVIKTQNLAALLHAIARRPKGQQLAWDFVRENWTHLLKKFDLGSYDIRMIISGTTAHFSSKDKLQEVKLFFESLEAQGSHLDIFQTVLETITKNIKWLEKNLPTLRTWLMVNT</sequence>
<dbReference type="EC" id="3.4.11.-"/>
<dbReference type="EMBL" id="AB109031">
    <property type="protein sequence ID" value="BAC78818.1"/>
    <property type="molecule type" value="mRNA"/>
</dbReference>
<dbReference type="EMBL" id="AB163917">
    <property type="protein sequence ID" value="BAD90015.1"/>
    <property type="molecule type" value="mRNA"/>
</dbReference>
<dbReference type="EMBL" id="AY028805">
    <property type="protein sequence ID" value="AAK37776.1"/>
    <property type="molecule type" value="mRNA"/>
</dbReference>
<dbReference type="EMBL" id="AF191545">
    <property type="protein sequence ID" value="AAG28383.1"/>
    <property type="molecule type" value="mRNA"/>
</dbReference>
<dbReference type="EMBL" id="CH471084">
    <property type="protein sequence ID" value="EAW96080.1"/>
    <property type="molecule type" value="Genomic_DNA"/>
</dbReference>
<dbReference type="EMBL" id="BC065240">
    <property type="protein sequence ID" value="AAH65240.1"/>
    <property type="molecule type" value="mRNA"/>
</dbReference>
<dbReference type="EMBL" id="BC017927">
    <property type="protein sequence ID" value="AAH17927.1"/>
    <property type="molecule type" value="mRNA"/>
</dbReference>
<dbReference type="CCDS" id="CCDS4086.1">
    <molecule id="Q6P179-1"/>
</dbReference>
<dbReference type="CCDS" id="CCDS87316.1">
    <molecule id="Q6P179-4"/>
</dbReference>
<dbReference type="CCDS" id="CCDS87317.1">
    <molecule id="Q6P179-3"/>
</dbReference>
<dbReference type="RefSeq" id="NP_001123612.1">
    <molecule id="Q6P179-1"/>
    <property type="nucleotide sequence ID" value="NM_001130140.2"/>
</dbReference>
<dbReference type="RefSeq" id="NP_001316158.1">
    <molecule id="Q6P179-3"/>
    <property type="nucleotide sequence ID" value="NM_001329229.1"/>
</dbReference>
<dbReference type="RefSeq" id="NP_001316162.1">
    <molecule id="Q6P179-4"/>
    <property type="nucleotide sequence ID" value="NM_001329233.1"/>
</dbReference>
<dbReference type="RefSeq" id="NP_071745.1">
    <molecule id="Q6P179-1"/>
    <property type="nucleotide sequence ID" value="NM_022350.5"/>
</dbReference>
<dbReference type="PDB" id="3SE6">
    <property type="method" value="X-ray"/>
    <property type="resolution" value="3.08 A"/>
    <property type="chains" value="A/B=1-960"/>
</dbReference>
<dbReference type="PDB" id="4E36">
    <property type="method" value="X-ray"/>
    <property type="resolution" value="3.22 A"/>
    <property type="chains" value="A/B=1-960"/>
</dbReference>
<dbReference type="PDB" id="4JBS">
    <property type="method" value="X-ray"/>
    <property type="resolution" value="2.79 A"/>
    <property type="chains" value="A/B=3-960"/>
</dbReference>
<dbReference type="PDB" id="5AB0">
    <property type="method" value="X-ray"/>
    <property type="resolution" value="2.50 A"/>
    <property type="chains" value="A/C=1-960"/>
</dbReference>
<dbReference type="PDB" id="5AB2">
    <property type="method" value="X-ray"/>
    <property type="resolution" value="2.73 A"/>
    <property type="chains" value="A/B=1-960"/>
</dbReference>
<dbReference type="PDB" id="5CU5">
    <property type="method" value="X-ray"/>
    <property type="resolution" value="3.02 A"/>
    <property type="chains" value="A/B=1-960"/>
</dbReference>
<dbReference type="PDB" id="5J6S">
    <property type="method" value="X-ray"/>
    <property type="resolution" value="2.80 A"/>
    <property type="chains" value="A/B=1-960"/>
</dbReference>
<dbReference type="PDB" id="5K1V">
    <property type="method" value="X-ray"/>
    <property type="resolution" value="2.90 A"/>
    <property type="chains" value="A/B=1-960"/>
</dbReference>
<dbReference type="PDB" id="6EA4">
    <property type="method" value="X-ray"/>
    <property type="resolution" value="2.45 A"/>
    <property type="chains" value="A/B=1-960"/>
</dbReference>
<dbReference type="PDB" id="7NSK">
    <property type="method" value="X-ray"/>
    <property type="resolution" value="3.10 A"/>
    <property type="chains" value="A/B=1-960"/>
</dbReference>
<dbReference type="PDB" id="7NUP">
    <property type="method" value="X-ray"/>
    <property type="resolution" value="3.10 A"/>
    <property type="chains" value="A/B/C/D=1-960"/>
</dbReference>
<dbReference type="PDB" id="7P7P">
    <property type="method" value="X-ray"/>
    <property type="resolution" value="3.00 A"/>
    <property type="chains" value="A/B=1-960"/>
</dbReference>
<dbReference type="PDB" id="7PFS">
    <property type="method" value="X-ray"/>
    <property type="resolution" value="2.70 A"/>
    <property type="chains" value="A/B=1-960"/>
</dbReference>
<dbReference type="PDB" id="7SH0">
    <property type="method" value="X-ray"/>
    <property type="resolution" value="3.20 A"/>
    <property type="chains" value="A/B=1-960"/>
</dbReference>
<dbReference type="PDBsum" id="3SE6"/>
<dbReference type="PDBsum" id="4E36"/>
<dbReference type="PDBsum" id="4JBS"/>
<dbReference type="PDBsum" id="5AB0"/>
<dbReference type="PDBsum" id="5AB2"/>
<dbReference type="PDBsum" id="5CU5"/>
<dbReference type="PDBsum" id="5J6S"/>
<dbReference type="PDBsum" id="5K1V"/>
<dbReference type="PDBsum" id="6EA4"/>
<dbReference type="PDBsum" id="7NSK"/>
<dbReference type="PDBsum" id="7NUP"/>
<dbReference type="PDBsum" id="7P7P"/>
<dbReference type="PDBsum" id="7PFS"/>
<dbReference type="PDBsum" id="7SH0"/>
<dbReference type="SMR" id="Q6P179"/>
<dbReference type="BioGRID" id="122092">
    <property type="interactions" value="25"/>
</dbReference>
<dbReference type="ComplexPortal" id="CPX-8736">
    <property type="entry name" value="ERAP1-ERAP2 endoplasmic reticulum aminopeptidase complex"/>
</dbReference>
<dbReference type="CORUM" id="Q6P179"/>
<dbReference type="FunCoup" id="Q6P179">
    <property type="interactions" value="122"/>
</dbReference>
<dbReference type="IntAct" id="Q6P179">
    <property type="interactions" value="6"/>
</dbReference>
<dbReference type="STRING" id="9606.ENSP00000400376"/>
<dbReference type="BindingDB" id="Q6P179"/>
<dbReference type="ChEMBL" id="CHEMBL5043"/>
<dbReference type="GuidetoPHARMACOLOGY" id="1567"/>
<dbReference type="MEROPS" id="M01.024"/>
<dbReference type="GlyConnect" id="1204">
    <property type="glycosylation" value="16 N-Linked glycans (7 sites)"/>
</dbReference>
<dbReference type="GlyCosmos" id="Q6P179">
    <property type="glycosylation" value="9 sites, 16 glycans"/>
</dbReference>
<dbReference type="GlyGen" id="Q6P179">
    <property type="glycosylation" value="11 sites, 42 N-linked glycans (8 sites), 1 O-linked glycan (1 site)"/>
</dbReference>
<dbReference type="iPTMnet" id="Q6P179"/>
<dbReference type="PhosphoSitePlus" id="Q6P179"/>
<dbReference type="BioMuta" id="ERAP2"/>
<dbReference type="DMDM" id="166232401"/>
<dbReference type="jPOST" id="Q6P179"/>
<dbReference type="MassIVE" id="Q6P179"/>
<dbReference type="PaxDb" id="9606-ENSP00000400376"/>
<dbReference type="PeptideAtlas" id="Q6P179"/>
<dbReference type="ProteomicsDB" id="66824">
    <molecule id="Q6P179-1"/>
</dbReference>
<dbReference type="ProteomicsDB" id="66825">
    <molecule id="Q6P179-2"/>
</dbReference>
<dbReference type="ProteomicsDB" id="66826">
    <molecule id="Q6P179-3"/>
</dbReference>
<dbReference type="ProteomicsDB" id="66827">
    <molecule id="Q6P179-4"/>
</dbReference>
<dbReference type="Antibodypedia" id="25082">
    <property type="antibodies" value="129 antibodies from 31 providers"/>
</dbReference>
<dbReference type="DNASU" id="64167"/>
<dbReference type="Ensembl" id="ENST00000379904.8">
    <molecule id="Q6P179-3"/>
    <property type="protein sequence ID" value="ENSP00000369235.4"/>
    <property type="gene ID" value="ENSG00000164308.18"/>
</dbReference>
<dbReference type="Ensembl" id="ENST00000437043.8">
    <molecule id="Q6P179-1"/>
    <property type="protein sequence ID" value="ENSP00000400376.3"/>
    <property type="gene ID" value="ENSG00000164308.18"/>
</dbReference>
<dbReference type="Ensembl" id="ENST00000510309.1">
    <molecule id="Q6P179-4"/>
    <property type="protein sequence ID" value="ENSP00000425758.1"/>
    <property type="gene ID" value="ENSG00000164308.18"/>
</dbReference>
<dbReference type="Ensembl" id="ENST00000510373.6">
    <molecule id="Q6P179-1"/>
    <property type="protein sequence ID" value="ENSP00000421175.2"/>
    <property type="gene ID" value="ENSG00000164308.18"/>
</dbReference>
<dbReference type="Ensembl" id="ENST00000513084.5">
    <molecule id="Q6P179-2"/>
    <property type="protein sequence ID" value="ENSP00000421849.1"/>
    <property type="gene ID" value="ENSG00000164308.18"/>
</dbReference>
<dbReference type="GeneID" id="64167"/>
<dbReference type="KEGG" id="hsa:64167"/>
<dbReference type="MANE-Select" id="ENST00000437043.8">
    <property type="protein sequence ID" value="ENSP00000400376.3"/>
    <property type="RefSeq nucleotide sequence ID" value="NM_022350.5"/>
    <property type="RefSeq protein sequence ID" value="NP_071745.1"/>
</dbReference>
<dbReference type="UCSC" id="uc003kmq.4">
    <molecule id="Q6P179-1"/>
    <property type="organism name" value="human"/>
</dbReference>
<dbReference type="AGR" id="HGNC:29499"/>
<dbReference type="CTD" id="64167"/>
<dbReference type="DisGeNET" id="64167"/>
<dbReference type="GeneCards" id="ERAP2"/>
<dbReference type="HGNC" id="HGNC:29499">
    <property type="gene designation" value="ERAP2"/>
</dbReference>
<dbReference type="HPA" id="ENSG00000164308">
    <property type="expression patterns" value="Tissue enhanced (lymphoid)"/>
</dbReference>
<dbReference type="MIM" id="609497">
    <property type="type" value="gene"/>
</dbReference>
<dbReference type="neXtProt" id="NX_Q6P179"/>
<dbReference type="OpenTargets" id="ENSG00000164308"/>
<dbReference type="PharmGKB" id="PA162385208"/>
<dbReference type="VEuPathDB" id="HostDB:ENSG00000164308"/>
<dbReference type="eggNOG" id="KOG1046">
    <property type="taxonomic scope" value="Eukaryota"/>
</dbReference>
<dbReference type="GeneTree" id="ENSGT00940000162653"/>
<dbReference type="HOGENOM" id="CLU_003705_0_1_1"/>
<dbReference type="InParanoid" id="Q6P179"/>
<dbReference type="OMA" id="WGTMEHP"/>
<dbReference type="OrthoDB" id="10031169at2759"/>
<dbReference type="PAN-GO" id="Q6P179">
    <property type="GO annotations" value="9 GO annotations based on evolutionary models"/>
</dbReference>
<dbReference type="PhylomeDB" id="Q6P179"/>
<dbReference type="TreeFam" id="TF300395"/>
<dbReference type="BRENDA" id="3.4.11.1">
    <property type="organism ID" value="2681"/>
</dbReference>
<dbReference type="BRENDA" id="3.4.11.6">
    <property type="organism ID" value="2681"/>
</dbReference>
<dbReference type="PathwayCommons" id="Q6P179"/>
<dbReference type="Reactome" id="R-HSA-983170">
    <property type="pathway name" value="Antigen Presentation: Folding, assembly and peptide loading of class I MHC"/>
</dbReference>
<dbReference type="SABIO-RK" id="Q6P179"/>
<dbReference type="SignaLink" id="Q6P179"/>
<dbReference type="SIGNOR" id="Q6P179"/>
<dbReference type="BioGRID-ORCS" id="64167">
    <property type="hits" value="10 hits in 1153 CRISPR screens"/>
</dbReference>
<dbReference type="ChiTaRS" id="ERAP2">
    <property type="organism name" value="human"/>
</dbReference>
<dbReference type="EvolutionaryTrace" id="Q6P179"/>
<dbReference type="GenomeRNAi" id="64167"/>
<dbReference type="Pharos" id="Q6P179">
    <property type="development level" value="Tchem"/>
</dbReference>
<dbReference type="PRO" id="PR:Q6P179"/>
<dbReference type="Proteomes" id="UP000005640">
    <property type="component" value="Chromosome 5"/>
</dbReference>
<dbReference type="RNAct" id="Q6P179">
    <property type="molecule type" value="protein"/>
</dbReference>
<dbReference type="Bgee" id="ENSG00000164308">
    <property type="expression patterns" value="Expressed in buccal mucosa cell and 167 other cell types or tissues"/>
</dbReference>
<dbReference type="ExpressionAtlas" id="Q6P179">
    <property type="expression patterns" value="baseline and differential"/>
</dbReference>
<dbReference type="GO" id="GO:0005737">
    <property type="term" value="C:cytoplasm"/>
    <property type="evidence" value="ECO:0000318"/>
    <property type="project" value="GO_Central"/>
</dbReference>
<dbReference type="GO" id="GO:0005788">
    <property type="term" value="C:endoplasmic reticulum lumen"/>
    <property type="evidence" value="ECO:0000314"/>
    <property type="project" value="BHF-UCL"/>
</dbReference>
<dbReference type="GO" id="GO:0005789">
    <property type="term" value="C:endoplasmic reticulum membrane"/>
    <property type="evidence" value="ECO:0007669"/>
    <property type="project" value="UniProtKB-SubCell"/>
</dbReference>
<dbReference type="GO" id="GO:0005615">
    <property type="term" value="C:extracellular space"/>
    <property type="evidence" value="ECO:0000318"/>
    <property type="project" value="GO_Central"/>
</dbReference>
<dbReference type="GO" id="GO:0016020">
    <property type="term" value="C:membrane"/>
    <property type="evidence" value="ECO:0000318"/>
    <property type="project" value="GO_Central"/>
</dbReference>
<dbReference type="GO" id="GO:0004177">
    <property type="term" value="F:aminopeptidase activity"/>
    <property type="evidence" value="ECO:0000314"/>
    <property type="project" value="HGNC-UCL"/>
</dbReference>
<dbReference type="GO" id="GO:0004175">
    <property type="term" value="F:endopeptidase activity"/>
    <property type="evidence" value="ECO:0000269"/>
    <property type="project" value="Reactome"/>
</dbReference>
<dbReference type="GO" id="GO:0070006">
    <property type="term" value="F:metalloaminopeptidase activity"/>
    <property type="evidence" value="ECO:0000318"/>
    <property type="project" value="GO_Central"/>
</dbReference>
<dbReference type="GO" id="GO:0008237">
    <property type="term" value="F:metallopeptidase activity"/>
    <property type="evidence" value="ECO:0000314"/>
    <property type="project" value="HGNC-UCL"/>
</dbReference>
<dbReference type="GO" id="GO:0042277">
    <property type="term" value="F:peptide binding"/>
    <property type="evidence" value="ECO:0000318"/>
    <property type="project" value="GO_Central"/>
</dbReference>
<dbReference type="GO" id="GO:0008270">
    <property type="term" value="F:zinc ion binding"/>
    <property type="evidence" value="ECO:0000318"/>
    <property type="project" value="GO_Central"/>
</dbReference>
<dbReference type="GO" id="GO:0002250">
    <property type="term" value="P:adaptive immune response"/>
    <property type="evidence" value="ECO:0007669"/>
    <property type="project" value="UniProtKB-KW"/>
</dbReference>
<dbReference type="GO" id="GO:0019885">
    <property type="term" value="P:antigen processing and presentation of endogenous peptide antigen via MHC class I"/>
    <property type="evidence" value="ECO:0000304"/>
    <property type="project" value="HGNC-UCL"/>
</dbReference>
<dbReference type="GO" id="GO:0002474">
    <property type="term" value="P:antigen processing and presentation of peptide antigen via MHC class I"/>
    <property type="evidence" value="ECO:0000304"/>
    <property type="project" value="Reactome"/>
</dbReference>
<dbReference type="GO" id="GO:0043171">
    <property type="term" value="P:peptide catabolic process"/>
    <property type="evidence" value="ECO:0000318"/>
    <property type="project" value="GO_Central"/>
</dbReference>
<dbReference type="GO" id="GO:0006508">
    <property type="term" value="P:proteolysis"/>
    <property type="evidence" value="ECO:0000318"/>
    <property type="project" value="GO_Central"/>
</dbReference>
<dbReference type="GO" id="GO:0008217">
    <property type="term" value="P:regulation of blood pressure"/>
    <property type="evidence" value="ECO:0000304"/>
    <property type="project" value="HGNC-UCL"/>
</dbReference>
<dbReference type="CDD" id="cd09601">
    <property type="entry name" value="M1_APN-Q_like"/>
    <property type="match status" value="1"/>
</dbReference>
<dbReference type="FunFam" id="1.10.390.10:FF:000007">
    <property type="entry name" value="Aminopeptidase"/>
    <property type="match status" value="1"/>
</dbReference>
<dbReference type="FunFam" id="2.60.40.1730:FF:000046">
    <property type="entry name" value="Endoplasmic reticulum aminopeptidase 2"/>
    <property type="match status" value="1"/>
</dbReference>
<dbReference type="FunFam" id="1.25.50.20:FF:000003">
    <property type="entry name" value="Leucyl-cystinyl aminopeptidase"/>
    <property type="match status" value="1"/>
</dbReference>
<dbReference type="FunFam" id="2.60.40.1910:FF:000001">
    <property type="entry name" value="Leucyl-cystinyl aminopeptidase"/>
    <property type="match status" value="1"/>
</dbReference>
<dbReference type="Gene3D" id="1.25.50.20">
    <property type="match status" value="1"/>
</dbReference>
<dbReference type="Gene3D" id="2.60.40.1910">
    <property type="match status" value="1"/>
</dbReference>
<dbReference type="Gene3D" id="1.10.390.10">
    <property type="entry name" value="Neutral Protease Domain 2"/>
    <property type="match status" value="1"/>
</dbReference>
<dbReference type="Gene3D" id="2.60.40.1730">
    <property type="entry name" value="tricorn interacting facor f3 domain"/>
    <property type="match status" value="1"/>
</dbReference>
<dbReference type="InterPro" id="IPR045357">
    <property type="entry name" value="Aminopeptidase_N-like_N"/>
</dbReference>
<dbReference type="InterPro" id="IPR042097">
    <property type="entry name" value="Aminopeptidase_N-like_N_sf"/>
</dbReference>
<dbReference type="InterPro" id="IPR024571">
    <property type="entry name" value="ERAP1-like_C_dom"/>
</dbReference>
<dbReference type="InterPro" id="IPR034016">
    <property type="entry name" value="M1_APN-typ"/>
</dbReference>
<dbReference type="InterPro" id="IPR001930">
    <property type="entry name" value="Peptidase_M1"/>
</dbReference>
<dbReference type="InterPro" id="IPR050344">
    <property type="entry name" value="Peptidase_M1_aminopeptidases"/>
</dbReference>
<dbReference type="InterPro" id="IPR014782">
    <property type="entry name" value="Peptidase_M1_dom"/>
</dbReference>
<dbReference type="InterPro" id="IPR027268">
    <property type="entry name" value="Peptidase_M4/M1_CTD_sf"/>
</dbReference>
<dbReference type="PANTHER" id="PTHR11533:SF239">
    <property type="entry name" value="ENDOPLASMIC RETICULUM AMINOPEPTIDASE 2"/>
    <property type="match status" value="1"/>
</dbReference>
<dbReference type="PANTHER" id="PTHR11533">
    <property type="entry name" value="PROTEASE M1 ZINC METALLOPROTEASE"/>
    <property type="match status" value="1"/>
</dbReference>
<dbReference type="Pfam" id="PF11838">
    <property type="entry name" value="ERAP1_C"/>
    <property type="match status" value="1"/>
</dbReference>
<dbReference type="Pfam" id="PF01433">
    <property type="entry name" value="Peptidase_M1"/>
    <property type="match status" value="1"/>
</dbReference>
<dbReference type="Pfam" id="PF17900">
    <property type="entry name" value="Peptidase_M1_N"/>
    <property type="match status" value="1"/>
</dbReference>
<dbReference type="PRINTS" id="PR00756">
    <property type="entry name" value="ALADIPTASE"/>
</dbReference>
<dbReference type="SUPFAM" id="SSF63737">
    <property type="entry name" value="Leukotriene A4 hydrolase N-terminal domain"/>
    <property type="match status" value="1"/>
</dbReference>
<dbReference type="SUPFAM" id="SSF55486">
    <property type="entry name" value="Metalloproteases ('zincins'), catalytic domain"/>
    <property type="match status" value="1"/>
</dbReference>
<dbReference type="PROSITE" id="PS00142">
    <property type="entry name" value="ZINC_PROTEASE"/>
    <property type="match status" value="1"/>
</dbReference>
<evidence type="ECO:0000250" key="1"/>
<evidence type="ECO:0000255" key="2"/>
<evidence type="ECO:0000255" key="3">
    <source>
        <dbReference type="PROSITE-ProRule" id="PRU10095"/>
    </source>
</evidence>
<evidence type="ECO:0000269" key="4">
    <source>
    </source>
</evidence>
<evidence type="ECO:0000269" key="5">
    <source>
    </source>
</evidence>
<evidence type="ECO:0000269" key="6">
    <source>
    </source>
</evidence>
<evidence type="ECO:0000269" key="7">
    <source>
    </source>
</evidence>
<evidence type="ECO:0000269" key="8">
    <source>
    </source>
</evidence>
<evidence type="ECO:0000269" key="9">
    <source>
    </source>
</evidence>
<evidence type="ECO:0000303" key="10">
    <source>
    </source>
</evidence>
<evidence type="ECO:0000303" key="11">
    <source>
    </source>
</evidence>
<evidence type="ECO:0000305" key="12"/>
<evidence type="ECO:0007829" key="13">
    <source>
        <dbReference type="PDB" id="4E36"/>
    </source>
</evidence>
<evidence type="ECO:0007829" key="14">
    <source>
        <dbReference type="PDB" id="5AB0"/>
    </source>
</evidence>
<evidence type="ECO:0007829" key="15">
    <source>
        <dbReference type="PDB" id="5J6S"/>
    </source>
</evidence>
<evidence type="ECO:0007829" key="16">
    <source>
        <dbReference type="PDB" id="6EA4"/>
    </source>
</evidence>
<evidence type="ECO:0007829" key="17">
    <source>
        <dbReference type="PDB" id="7NSK"/>
    </source>
</evidence>
<evidence type="ECO:0007829" key="18">
    <source>
        <dbReference type="PDB" id="7P7P"/>
    </source>
</evidence>
<evidence type="ECO:0007829" key="19">
    <source>
        <dbReference type="PDB" id="7PFS"/>
    </source>
</evidence>